<comment type="function">
    <text evidence="4">Component of the chromatin structure remodeling complex (RSC), which is involved in transcription regulation and nucleosome positioning. Controls particularly membrane and organelle development genes. Part of the SWI/SNF complex, an ATP-dependent chromatin remodeling complex, required for the positive and negative regulation of gene expression of a large number of genes. It changes chromatin structure by altering DNA-histone contacts within a nucleosome, leading eventually to a change in nucleosome position, thus facilitating or repressing binding of gene-specific transcription factors.</text>
</comment>
<comment type="subunit">
    <text evidence="1 4">Component of the RSC complex composed of at least arp9, arp42, rsc1, rsc4, rsc7, rsc9, rsc58, sfh1, snf21, ssr1, ssr2, ssr3 and ssr4. The complex interacts with histone and histone variant components of centromeric chromatin (By similarity). Component of the SWI/SNF global transcription activator complex composed of at least arp9, arp42, snf5, snf22, snf30, sbf59, sol1, ssr1, ssr2, ssr3, ssr4 and tfg3.</text>
</comment>
<comment type="subcellular location">
    <subcellularLocation>
        <location evidence="3">Cytoplasm</location>
    </subcellularLocation>
    <subcellularLocation>
        <location evidence="3">Nucleus</location>
    </subcellularLocation>
</comment>
<comment type="similarity">
    <text evidence="5">Belongs to the SSR4 family.</text>
</comment>
<organism>
    <name type="scientific">Schizosaccharomyces pombe (strain 972 / ATCC 24843)</name>
    <name type="common">Fission yeast</name>
    <dbReference type="NCBI Taxonomy" id="284812"/>
    <lineage>
        <taxon>Eukaryota</taxon>
        <taxon>Fungi</taxon>
        <taxon>Dikarya</taxon>
        <taxon>Ascomycota</taxon>
        <taxon>Taphrinomycotina</taxon>
        <taxon>Schizosaccharomycetes</taxon>
        <taxon>Schizosaccharomycetales</taxon>
        <taxon>Schizosaccharomycetaceae</taxon>
        <taxon>Schizosaccharomyces</taxon>
    </lineage>
</organism>
<accession>Q9P7Y0</accession>
<proteinExistence type="evidence at protein level"/>
<evidence type="ECO:0000250" key="1"/>
<evidence type="ECO:0000256" key="2">
    <source>
        <dbReference type="SAM" id="MobiDB-lite"/>
    </source>
</evidence>
<evidence type="ECO:0000269" key="3">
    <source>
    </source>
</evidence>
<evidence type="ECO:0000269" key="4">
    <source>
    </source>
</evidence>
<evidence type="ECO:0000305" key="5"/>
<evidence type="ECO:0007829" key="6">
    <source>
        <dbReference type="PDB" id="7K7V"/>
    </source>
</evidence>
<evidence type="ECO:0007829" key="7">
    <source>
        <dbReference type="PDB" id="7K7W"/>
    </source>
</evidence>
<reference key="1">
    <citation type="journal article" date="2002" name="Nature">
        <title>The genome sequence of Schizosaccharomyces pombe.</title>
        <authorList>
            <person name="Wood V."/>
            <person name="Gwilliam R."/>
            <person name="Rajandream M.A."/>
            <person name="Lyne M.H."/>
            <person name="Lyne R."/>
            <person name="Stewart A."/>
            <person name="Sgouros J.G."/>
            <person name="Peat N."/>
            <person name="Hayles J."/>
            <person name="Baker S.G."/>
            <person name="Basham D."/>
            <person name="Bowman S."/>
            <person name="Brooks K."/>
            <person name="Brown D."/>
            <person name="Brown S."/>
            <person name="Chillingworth T."/>
            <person name="Churcher C.M."/>
            <person name="Collins M."/>
            <person name="Connor R."/>
            <person name="Cronin A."/>
            <person name="Davis P."/>
            <person name="Feltwell T."/>
            <person name="Fraser A."/>
            <person name="Gentles S."/>
            <person name="Goble A."/>
            <person name="Hamlin N."/>
            <person name="Harris D.E."/>
            <person name="Hidalgo J."/>
            <person name="Hodgson G."/>
            <person name="Holroyd S."/>
            <person name="Hornsby T."/>
            <person name="Howarth S."/>
            <person name="Huckle E.J."/>
            <person name="Hunt S."/>
            <person name="Jagels K."/>
            <person name="James K.D."/>
            <person name="Jones L."/>
            <person name="Jones M."/>
            <person name="Leather S."/>
            <person name="McDonald S."/>
            <person name="McLean J."/>
            <person name="Mooney P."/>
            <person name="Moule S."/>
            <person name="Mungall K.L."/>
            <person name="Murphy L.D."/>
            <person name="Niblett D."/>
            <person name="Odell C."/>
            <person name="Oliver K."/>
            <person name="O'Neil S."/>
            <person name="Pearson D."/>
            <person name="Quail M.A."/>
            <person name="Rabbinowitsch E."/>
            <person name="Rutherford K.M."/>
            <person name="Rutter S."/>
            <person name="Saunders D."/>
            <person name="Seeger K."/>
            <person name="Sharp S."/>
            <person name="Skelton J."/>
            <person name="Simmonds M.N."/>
            <person name="Squares R."/>
            <person name="Squares S."/>
            <person name="Stevens K."/>
            <person name="Taylor K."/>
            <person name="Taylor R.G."/>
            <person name="Tivey A."/>
            <person name="Walsh S.V."/>
            <person name="Warren T."/>
            <person name="Whitehead S."/>
            <person name="Woodward J.R."/>
            <person name="Volckaert G."/>
            <person name="Aert R."/>
            <person name="Robben J."/>
            <person name="Grymonprez B."/>
            <person name="Weltjens I."/>
            <person name="Vanstreels E."/>
            <person name="Rieger M."/>
            <person name="Schaefer M."/>
            <person name="Mueller-Auer S."/>
            <person name="Gabel C."/>
            <person name="Fuchs M."/>
            <person name="Duesterhoeft A."/>
            <person name="Fritzc C."/>
            <person name="Holzer E."/>
            <person name="Moestl D."/>
            <person name="Hilbert H."/>
            <person name="Borzym K."/>
            <person name="Langer I."/>
            <person name="Beck A."/>
            <person name="Lehrach H."/>
            <person name="Reinhardt R."/>
            <person name="Pohl T.M."/>
            <person name="Eger P."/>
            <person name="Zimmermann W."/>
            <person name="Wedler H."/>
            <person name="Wambutt R."/>
            <person name="Purnelle B."/>
            <person name="Goffeau A."/>
            <person name="Cadieu E."/>
            <person name="Dreano S."/>
            <person name="Gloux S."/>
            <person name="Lelaure V."/>
            <person name="Mottier S."/>
            <person name="Galibert F."/>
            <person name="Aves S.J."/>
            <person name="Xiang Z."/>
            <person name="Hunt C."/>
            <person name="Moore K."/>
            <person name="Hurst S.M."/>
            <person name="Lucas M."/>
            <person name="Rochet M."/>
            <person name="Gaillardin C."/>
            <person name="Tallada V.A."/>
            <person name="Garzon A."/>
            <person name="Thode G."/>
            <person name="Daga R.R."/>
            <person name="Cruzado L."/>
            <person name="Jimenez J."/>
            <person name="Sanchez M."/>
            <person name="del Rey F."/>
            <person name="Benito J."/>
            <person name="Dominguez A."/>
            <person name="Revuelta J.L."/>
            <person name="Moreno S."/>
            <person name="Armstrong J."/>
            <person name="Forsburg S.L."/>
            <person name="Cerutti L."/>
            <person name="Lowe T."/>
            <person name="McCombie W.R."/>
            <person name="Paulsen I."/>
            <person name="Potashkin J."/>
            <person name="Shpakovski G.V."/>
            <person name="Ussery D."/>
            <person name="Barrell B.G."/>
            <person name="Nurse P."/>
        </authorList>
    </citation>
    <scope>NUCLEOTIDE SEQUENCE [LARGE SCALE GENOMIC DNA]</scope>
    <source>
        <strain>972 / ATCC 24843</strain>
    </source>
</reference>
<reference key="2">
    <citation type="journal article" date="2006" name="Nat. Biotechnol.">
        <title>ORFeome cloning and global analysis of protein localization in the fission yeast Schizosaccharomyces pombe.</title>
        <authorList>
            <person name="Matsuyama A."/>
            <person name="Arai R."/>
            <person name="Yashiroda Y."/>
            <person name="Shirai A."/>
            <person name="Kamata A."/>
            <person name="Sekido S."/>
            <person name="Kobayashi Y."/>
            <person name="Hashimoto A."/>
            <person name="Hamamoto M."/>
            <person name="Hiraoka Y."/>
            <person name="Horinouchi S."/>
            <person name="Yoshida M."/>
        </authorList>
    </citation>
    <scope>SUBCELLULAR LOCATION [LARGE SCALE ANALYSIS]</scope>
</reference>
<reference key="3">
    <citation type="journal article" date="2008" name="Nat. Struct. Mol. Biol.">
        <title>Fission yeast SWI/SNF and RSC complexes show compositional and functional differences from budding yeast.</title>
        <authorList>
            <person name="Monahan B.J."/>
            <person name="Villen J."/>
            <person name="Marguerat S."/>
            <person name="Baehler J."/>
            <person name="Gygi S.P."/>
            <person name="Winston F."/>
        </authorList>
    </citation>
    <scope>IDENTIFICATION IN THE SWI/SNF AND RSC COMPLEXES</scope>
    <scope>FUNCTION OF THE SWI/SNF AND RSC COMPLEXES</scope>
    <scope>IDENTIFICATION BY MASS SPECTROMETRY</scope>
</reference>
<protein>
    <recommendedName>
        <fullName>SWI/SNF and RSC complexes subunit ssr4</fullName>
    </recommendedName>
</protein>
<dbReference type="EMBL" id="CU329671">
    <property type="protein sequence ID" value="CAB66433.1"/>
    <property type="molecule type" value="Genomic_DNA"/>
</dbReference>
<dbReference type="PIR" id="T50392">
    <property type="entry name" value="T50392"/>
</dbReference>
<dbReference type="RefSeq" id="NP_595817.1">
    <property type="nucleotide sequence ID" value="NM_001021721.2"/>
</dbReference>
<dbReference type="PDB" id="7K7V">
    <property type="method" value="X-ray"/>
    <property type="resolution" value="1.88 A"/>
    <property type="chains" value="A=2-180"/>
</dbReference>
<dbReference type="PDB" id="7K7W">
    <property type="method" value="X-ray"/>
    <property type="resolution" value="1.77 A"/>
    <property type="chains" value="A=2-180"/>
</dbReference>
<dbReference type="PDB" id="7K82">
    <property type="method" value="X-ray"/>
    <property type="resolution" value="2.10 A"/>
    <property type="chains" value="A=2-180"/>
</dbReference>
<dbReference type="PDBsum" id="7K7V"/>
<dbReference type="PDBsum" id="7K7W"/>
<dbReference type="PDBsum" id="7K82"/>
<dbReference type="SMR" id="Q9P7Y0"/>
<dbReference type="BioGRID" id="277813">
    <property type="interactions" value="14"/>
</dbReference>
<dbReference type="ComplexPortal" id="CPX-6362">
    <property type="entry name" value="SWI/SNF chromatin remodelling complex"/>
</dbReference>
<dbReference type="ComplexPortal" id="CPX-6363">
    <property type="entry name" value="RSC chromatin remodelling complex"/>
</dbReference>
<dbReference type="DIP" id="DIP-48386N"/>
<dbReference type="FunCoup" id="Q9P7Y0">
    <property type="interactions" value="18"/>
</dbReference>
<dbReference type="IntAct" id="Q9P7Y0">
    <property type="interactions" value="10"/>
</dbReference>
<dbReference type="STRING" id="284812.Q9P7Y0"/>
<dbReference type="iPTMnet" id="Q9P7Y0"/>
<dbReference type="PaxDb" id="4896-SPBP23A10.05.1"/>
<dbReference type="EnsemblFungi" id="SPBP23A10.05.1">
    <property type="protein sequence ID" value="SPBP23A10.05.1:pep"/>
    <property type="gene ID" value="SPBP23A10.05"/>
</dbReference>
<dbReference type="GeneID" id="2541301"/>
<dbReference type="KEGG" id="spo:2541301"/>
<dbReference type="PomBase" id="SPBP23A10.05">
    <property type="gene designation" value="ssr4"/>
</dbReference>
<dbReference type="VEuPathDB" id="FungiDB:SPBP23A10.05"/>
<dbReference type="eggNOG" id="ENOG502S04K">
    <property type="taxonomic scope" value="Eukaryota"/>
</dbReference>
<dbReference type="HOGENOM" id="CLU_040576_0_0_1"/>
<dbReference type="InParanoid" id="Q9P7Y0"/>
<dbReference type="OMA" id="QICTARF"/>
<dbReference type="PhylomeDB" id="Q9P7Y0"/>
<dbReference type="PRO" id="PR:Q9P7Y0"/>
<dbReference type="Proteomes" id="UP000002485">
    <property type="component" value="Chromosome II"/>
</dbReference>
<dbReference type="GO" id="GO:0000785">
    <property type="term" value="C:chromatin"/>
    <property type="evidence" value="ECO:0000303"/>
    <property type="project" value="ComplexPortal"/>
</dbReference>
<dbReference type="GO" id="GO:0005829">
    <property type="term" value="C:cytosol"/>
    <property type="evidence" value="ECO:0007005"/>
    <property type="project" value="PomBase"/>
</dbReference>
<dbReference type="GO" id="GO:0005634">
    <property type="term" value="C:nucleus"/>
    <property type="evidence" value="ECO:0007005"/>
    <property type="project" value="PomBase"/>
</dbReference>
<dbReference type="GO" id="GO:0016586">
    <property type="term" value="C:RSC-type complex"/>
    <property type="evidence" value="ECO:0000314"/>
    <property type="project" value="PomBase"/>
</dbReference>
<dbReference type="GO" id="GO:0016514">
    <property type="term" value="C:SWI/SNF complex"/>
    <property type="evidence" value="ECO:0000314"/>
    <property type="project" value="PomBase"/>
</dbReference>
<dbReference type="GO" id="GO:0006338">
    <property type="term" value="P:chromatin remodeling"/>
    <property type="evidence" value="ECO:0000303"/>
    <property type="project" value="ComplexPortal"/>
</dbReference>
<dbReference type="GO" id="GO:0006357">
    <property type="term" value="P:regulation of transcription by RNA polymerase II"/>
    <property type="evidence" value="ECO:0000304"/>
    <property type="project" value="PomBase"/>
</dbReference>
<dbReference type="GO" id="GO:0045815">
    <property type="term" value="P:transcription initiation-coupled chromatin remodeling"/>
    <property type="evidence" value="ECO:0000305"/>
    <property type="project" value="PomBase"/>
</dbReference>
<dbReference type="InterPro" id="IPR013859">
    <property type="entry name" value="Ssr4_N"/>
</dbReference>
<dbReference type="InterPro" id="IPR046464">
    <property type="entry name" value="SWI-SNF_Ssr4_C"/>
</dbReference>
<dbReference type="Pfam" id="PF20497">
    <property type="entry name" value="SWI-SNF_Ssr4_C"/>
    <property type="match status" value="1"/>
</dbReference>
<dbReference type="Pfam" id="PF08549">
    <property type="entry name" value="SWI-SNF_Ssr4_N"/>
    <property type="match status" value="1"/>
</dbReference>
<sequence length="395" mass="44255">MAATMAAQSLLSIPVEYRSQVWCRANLPYPPAPQLPIPAVVDILTKASQALPQISFSWTLIDQPPDGSLFLVWQAPTLPSPPDGMHFMSNERFFNMDVAGKVLEIHEAKHGFYPLSETRTMHVRCRYRLLGVGFDNFWLVHYFQGSETDSIPANISVAKPPHLRRYPLPDVKTSPFLLQEPKKHIPEGTALSQRETLPNMGSAQMKSQSRTPSFSNVTTSPVPPINSNATAQTAEGHMGATNMTVDNMNKPSIPPNGNTSILMQEDLEIEKGDVMDKLSPQQICTARFIKHAEWMSQVLLTLQSVKDIEPPALWQEPNSMEELGKELKDNKEQLVKQDQKYQSLQGDLSYTDSMSNLLKEFSNIKSAEECDVLQKKIEEFAEAKIVPLSHVTERS</sequence>
<name>SSR4_SCHPO</name>
<keyword id="KW-0002">3D-structure</keyword>
<keyword id="KW-0156">Chromatin regulator</keyword>
<keyword id="KW-0963">Cytoplasm</keyword>
<keyword id="KW-0539">Nucleus</keyword>
<keyword id="KW-1185">Reference proteome</keyword>
<keyword id="KW-0804">Transcription</keyword>
<keyword id="KW-0805">Transcription regulation</keyword>
<feature type="chain" id="PRO_0000349433" description="SWI/SNF and RSC complexes subunit ssr4">
    <location>
        <begin position="1"/>
        <end position="395"/>
    </location>
</feature>
<feature type="region of interest" description="Disordered" evidence="2">
    <location>
        <begin position="182"/>
        <end position="230"/>
    </location>
</feature>
<feature type="compositionally biased region" description="Polar residues" evidence="2">
    <location>
        <begin position="190"/>
        <end position="230"/>
    </location>
</feature>
<feature type="helix" evidence="7">
    <location>
        <begin position="4"/>
        <end position="11"/>
    </location>
</feature>
<feature type="helix" evidence="7">
    <location>
        <begin position="15"/>
        <end position="17"/>
    </location>
</feature>
<feature type="turn" evidence="7">
    <location>
        <begin position="18"/>
        <end position="20"/>
    </location>
</feature>
<feature type="strand" evidence="7">
    <location>
        <begin position="22"/>
        <end position="27"/>
    </location>
</feature>
<feature type="helix" evidence="7">
    <location>
        <begin position="37"/>
        <end position="50"/>
    </location>
</feature>
<feature type="helix" evidence="7">
    <location>
        <begin position="51"/>
        <end position="53"/>
    </location>
</feature>
<feature type="strand" evidence="7">
    <location>
        <begin position="56"/>
        <end position="59"/>
    </location>
</feature>
<feature type="strand" evidence="7">
    <location>
        <begin position="69"/>
        <end position="73"/>
    </location>
</feature>
<feature type="strand" evidence="7">
    <location>
        <begin position="86"/>
        <end position="89"/>
    </location>
</feature>
<feature type="strand" evidence="7">
    <location>
        <begin position="92"/>
        <end position="98"/>
    </location>
</feature>
<feature type="strand" evidence="7">
    <location>
        <begin position="101"/>
        <end position="112"/>
    </location>
</feature>
<feature type="turn" evidence="7">
    <location>
        <begin position="114"/>
        <end position="116"/>
    </location>
</feature>
<feature type="strand" evidence="7">
    <location>
        <begin position="122"/>
        <end position="133"/>
    </location>
</feature>
<feature type="strand" evidence="7">
    <location>
        <begin position="137"/>
        <end position="144"/>
    </location>
</feature>
<feature type="turn" evidence="7">
    <location>
        <begin position="147"/>
        <end position="149"/>
    </location>
</feature>
<feature type="helix" evidence="7">
    <location>
        <begin position="155"/>
        <end position="157"/>
    </location>
</feature>
<feature type="strand" evidence="6">
    <location>
        <begin position="158"/>
        <end position="160"/>
    </location>
</feature>
<gene>
    <name type="primary">ssr4</name>
    <name type="ORF">SPBP23A10.05</name>
</gene>